<accession>B0CH08</accession>
<sequence length="129" mass="13891">MAKEATRVRRRERKNISSGVAHVNSTFNNTMITITDAQGNAIAWSSAGAQGFKGSRKSTPFAAQIAAEDCAKKAQEHGMRSLEVEVCGPGSGRESALRALQAAGFVITSIRDVTPIPHNGCRPRKKRRV</sequence>
<feature type="chain" id="PRO_1000086179" description="Small ribosomal subunit protein uS11">
    <location>
        <begin position="1"/>
        <end position="129"/>
    </location>
</feature>
<proteinExistence type="inferred from homology"/>
<gene>
    <name evidence="1" type="primary">rpsK</name>
    <name type="ordered locus">BSUIS_A1258</name>
</gene>
<reference key="1">
    <citation type="submission" date="2007-12" db="EMBL/GenBank/DDBJ databases">
        <title>Brucella suis ATCC 23445 whole genome shotgun sequencing project.</title>
        <authorList>
            <person name="Setubal J.C."/>
            <person name="Bowns C."/>
            <person name="Boyle S."/>
            <person name="Crasta O.R."/>
            <person name="Czar M.J."/>
            <person name="Dharmanolla C."/>
            <person name="Gillespie J.J."/>
            <person name="Kenyon R.W."/>
            <person name="Lu J."/>
            <person name="Mane S."/>
            <person name="Mohapatra S."/>
            <person name="Nagrani S."/>
            <person name="Purkayastha A."/>
            <person name="Rajasimha H.K."/>
            <person name="Shallom J.M."/>
            <person name="Shallom S."/>
            <person name="Shukla M."/>
            <person name="Snyder E.E."/>
            <person name="Sobral B.W."/>
            <person name="Wattam A.R."/>
            <person name="Will R."/>
            <person name="Williams K."/>
            <person name="Yoo H."/>
            <person name="Bruce D."/>
            <person name="Detter C."/>
            <person name="Munk C."/>
            <person name="Brettin T.S."/>
        </authorList>
    </citation>
    <scope>NUCLEOTIDE SEQUENCE [LARGE SCALE GENOMIC DNA]</scope>
    <source>
        <strain>ATCC 23445 / NCTC 10510</strain>
    </source>
</reference>
<evidence type="ECO:0000255" key="1">
    <source>
        <dbReference type="HAMAP-Rule" id="MF_01310"/>
    </source>
</evidence>
<evidence type="ECO:0000305" key="2"/>
<name>RS11_BRUSI</name>
<protein>
    <recommendedName>
        <fullName evidence="1">Small ribosomal subunit protein uS11</fullName>
    </recommendedName>
    <alternativeName>
        <fullName evidence="2">30S ribosomal protein S11</fullName>
    </alternativeName>
</protein>
<organism>
    <name type="scientific">Brucella suis (strain ATCC 23445 / NCTC 10510)</name>
    <dbReference type="NCBI Taxonomy" id="470137"/>
    <lineage>
        <taxon>Bacteria</taxon>
        <taxon>Pseudomonadati</taxon>
        <taxon>Pseudomonadota</taxon>
        <taxon>Alphaproteobacteria</taxon>
        <taxon>Hyphomicrobiales</taxon>
        <taxon>Brucellaceae</taxon>
        <taxon>Brucella/Ochrobactrum group</taxon>
        <taxon>Brucella</taxon>
    </lineage>
</organism>
<dbReference type="EMBL" id="CP000911">
    <property type="protein sequence ID" value="ABY38309.1"/>
    <property type="molecule type" value="Genomic_DNA"/>
</dbReference>
<dbReference type="RefSeq" id="WP_002964339.1">
    <property type="nucleotide sequence ID" value="NC_010169.1"/>
</dbReference>
<dbReference type="SMR" id="B0CH08"/>
<dbReference type="GeneID" id="97533547"/>
<dbReference type="KEGG" id="bmt:BSUIS_A1258"/>
<dbReference type="HOGENOM" id="CLU_072439_5_0_5"/>
<dbReference type="Proteomes" id="UP000008545">
    <property type="component" value="Chromosome I"/>
</dbReference>
<dbReference type="GO" id="GO:1990904">
    <property type="term" value="C:ribonucleoprotein complex"/>
    <property type="evidence" value="ECO:0007669"/>
    <property type="project" value="UniProtKB-KW"/>
</dbReference>
<dbReference type="GO" id="GO:0005840">
    <property type="term" value="C:ribosome"/>
    <property type="evidence" value="ECO:0007669"/>
    <property type="project" value="UniProtKB-KW"/>
</dbReference>
<dbReference type="GO" id="GO:0019843">
    <property type="term" value="F:rRNA binding"/>
    <property type="evidence" value="ECO:0007669"/>
    <property type="project" value="UniProtKB-UniRule"/>
</dbReference>
<dbReference type="GO" id="GO:0003735">
    <property type="term" value="F:structural constituent of ribosome"/>
    <property type="evidence" value="ECO:0007669"/>
    <property type="project" value="InterPro"/>
</dbReference>
<dbReference type="GO" id="GO:0006412">
    <property type="term" value="P:translation"/>
    <property type="evidence" value="ECO:0007669"/>
    <property type="project" value="UniProtKB-UniRule"/>
</dbReference>
<dbReference type="FunFam" id="3.30.420.80:FF:000001">
    <property type="entry name" value="30S ribosomal protein S11"/>
    <property type="match status" value="1"/>
</dbReference>
<dbReference type="Gene3D" id="3.30.420.80">
    <property type="entry name" value="Ribosomal protein S11"/>
    <property type="match status" value="1"/>
</dbReference>
<dbReference type="HAMAP" id="MF_01310">
    <property type="entry name" value="Ribosomal_uS11"/>
    <property type="match status" value="1"/>
</dbReference>
<dbReference type="InterPro" id="IPR001971">
    <property type="entry name" value="Ribosomal_uS11"/>
</dbReference>
<dbReference type="InterPro" id="IPR019981">
    <property type="entry name" value="Ribosomal_uS11_bac-type"/>
</dbReference>
<dbReference type="InterPro" id="IPR018102">
    <property type="entry name" value="Ribosomal_uS11_CS"/>
</dbReference>
<dbReference type="InterPro" id="IPR036967">
    <property type="entry name" value="Ribosomal_uS11_sf"/>
</dbReference>
<dbReference type="NCBIfam" id="NF003698">
    <property type="entry name" value="PRK05309.1"/>
    <property type="match status" value="1"/>
</dbReference>
<dbReference type="NCBIfam" id="TIGR03632">
    <property type="entry name" value="uS11_bact"/>
    <property type="match status" value="1"/>
</dbReference>
<dbReference type="PANTHER" id="PTHR11759">
    <property type="entry name" value="40S RIBOSOMAL PROTEIN S14/30S RIBOSOMAL PROTEIN S11"/>
    <property type="match status" value="1"/>
</dbReference>
<dbReference type="Pfam" id="PF00411">
    <property type="entry name" value="Ribosomal_S11"/>
    <property type="match status" value="1"/>
</dbReference>
<dbReference type="PIRSF" id="PIRSF002131">
    <property type="entry name" value="Ribosomal_S11"/>
    <property type="match status" value="1"/>
</dbReference>
<dbReference type="SUPFAM" id="SSF53137">
    <property type="entry name" value="Translational machinery components"/>
    <property type="match status" value="1"/>
</dbReference>
<dbReference type="PROSITE" id="PS00054">
    <property type="entry name" value="RIBOSOMAL_S11"/>
    <property type="match status" value="1"/>
</dbReference>
<keyword id="KW-0687">Ribonucleoprotein</keyword>
<keyword id="KW-0689">Ribosomal protein</keyword>
<keyword id="KW-0694">RNA-binding</keyword>
<keyword id="KW-0699">rRNA-binding</keyword>
<comment type="function">
    <text evidence="1">Located on the platform of the 30S subunit, it bridges several disparate RNA helices of the 16S rRNA. Forms part of the Shine-Dalgarno cleft in the 70S ribosome.</text>
</comment>
<comment type="subunit">
    <text evidence="1">Part of the 30S ribosomal subunit. Interacts with proteins S7 and S18. Binds to IF-3.</text>
</comment>
<comment type="similarity">
    <text evidence="1">Belongs to the universal ribosomal protein uS11 family.</text>
</comment>